<dbReference type="EMBL" id="AAFI02000003">
    <property type="protein sequence ID" value="EAL73346.1"/>
    <property type="molecule type" value="Genomic_DNA"/>
</dbReference>
<dbReference type="RefSeq" id="XP_647308.1">
    <property type="nucleotide sequence ID" value="XM_642216.1"/>
</dbReference>
<dbReference type="SMR" id="Q55G75"/>
<dbReference type="PaxDb" id="44689-DDB0232013"/>
<dbReference type="EnsemblProtists" id="EAL73346">
    <property type="protein sequence ID" value="EAL73346"/>
    <property type="gene ID" value="DDB_G0267786"/>
</dbReference>
<dbReference type="GeneID" id="8616119"/>
<dbReference type="KEGG" id="ddi:DDB_G0267786"/>
<dbReference type="dictyBase" id="DDB_G0267786"/>
<dbReference type="VEuPathDB" id="AmoebaDB:DDB_G0267786"/>
<dbReference type="eggNOG" id="ENOG502RENY">
    <property type="taxonomic scope" value="Eukaryota"/>
</dbReference>
<dbReference type="HOGENOM" id="CLU_516246_0_0_1"/>
<dbReference type="InParanoid" id="Q55G75"/>
<dbReference type="OMA" id="GTPIDWG"/>
<dbReference type="PhylomeDB" id="Q55G75"/>
<dbReference type="PRO" id="PR:Q55G75"/>
<dbReference type="Proteomes" id="UP000002195">
    <property type="component" value="Chromosome 1"/>
</dbReference>
<dbReference type="CDD" id="cd23949">
    <property type="entry name" value="Niban-like"/>
    <property type="match status" value="1"/>
</dbReference>
<dbReference type="Gene3D" id="2.30.29.30">
    <property type="entry name" value="Pleckstrin-homology domain (PH domain)/Phosphotyrosine-binding domain (PTB)"/>
    <property type="match status" value="1"/>
</dbReference>
<dbReference type="InterPro" id="IPR026088">
    <property type="entry name" value="Niban-like"/>
</dbReference>
<dbReference type="InterPro" id="IPR011993">
    <property type="entry name" value="PH-like_dom_sf"/>
</dbReference>
<dbReference type="InterPro" id="IPR001849">
    <property type="entry name" value="PH_domain"/>
</dbReference>
<dbReference type="PANTHER" id="PTHR14392">
    <property type="entry name" value="NIBAN FAMILY MEMBER"/>
    <property type="match status" value="1"/>
</dbReference>
<dbReference type="PANTHER" id="PTHR14392:SF8">
    <property type="entry name" value="PH DOMAIN-CONTAINING PROTEIN DDB_G0267786"/>
    <property type="match status" value="1"/>
</dbReference>
<dbReference type="Pfam" id="PF00169">
    <property type="entry name" value="PH"/>
    <property type="match status" value="1"/>
</dbReference>
<dbReference type="SMART" id="SM00233">
    <property type="entry name" value="PH"/>
    <property type="match status" value="1"/>
</dbReference>
<dbReference type="SUPFAM" id="SSF50729">
    <property type="entry name" value="PH domain-like"/>
    <property type="match status" value="1"/>
</dbReference>
<dbReference type="PROSITE" id="PS50003">
    <property type="entry name" value="PH_DOMAIN"/>
    <property type="match status" value="1"/>
</dbReference>
<gene>
    <name type="ORF">DDB_G0267786</name>
</gene>
<proteinExistence type="predicted"/>
<sequence>MDAQIKNEIVELTKAMLETFTKEYIKAYTIQITKKAIKDAKAIPSPYLLEPRPRDHDKSDVFSGYLVKLGAIRKNWLKRHFVVRYDYSIDYFVDDKHTNKKGTINLCGYSVNDDPNKSGLDRILKIAEKMGVDTSSIPKPAQLPPFTIELYHYSRRCYYIQCANEEEFKEWIEIFKTCCRRSHGFKNKDPCHIAAFGIAVRNTRWSLGRWGWFGYGGNENQILSDIILDEIEYDILGRALSKLPNAPWFIRNYLRNKMMTVIEGMVSSAVAPAWTGLSKTVEELRPTIEPRIKNQVDPIAQAQTNIINKMRESMMSQIKPAMEEHVNKHLKKIIGEIRTPIENGFDESLKIWNEKTNAYNGNGSTESFSSYRSYPNSYWTMYPAKDKISPLYSIVEEYRPIFRDYSSYFICYDIKESINNMAYDGAYTLEKTVTQDQVDVASAKNQTHSKYQHDVILGTNMQLKFVVREMVKPTLCKIINPLTKPLLNTLSSSIPSAIGDFIDINELYNQLVDDILNDSTQVVIDELN</sequence>
<evidence type="ECO:0000255" key="1">
    <source>
        <dbReference type="PROSITE-ProRule" id="PRU00145"/>
    </source>
</evidence>
<reference key="1">
    <citation type="journal article" date="2005" name="Nature">
        <title>The genome of the social amoeba Dictyostelium discoideum.</title>
        <authorList>
            <person name="Eichinger L."/>
            <person name="Pachebat J.A."/>
            <person name="Gloeckner G."/>
            <person name="Rajandream M.A."/>
            <person name="Sucgang R."/>
            <person name="Berriman M."/>
            <person name="Song J."/>
            <person name="Olsen R."/>
            <person name="Szafranski K."/>
            <person name="Xu Q."/>
            <person name="Tunggal B."/>
            <person name="Kummerfeld S."/>
            <person name="Madera M."/>
            <person name="Konfortov B.A."/>
            <person name="Rivero F."/>
            <person name="Bankier A.T."/>
            <person name="Lehmann R."/>
            <person name="Hamlin N."/>
            <person name="Davies R."/>
            <person name="Gaudet P."/>
            <person name="Fey P."/>
            <person name="Pilcher K."/>
            <person name="Chen G."/>
            <person name="Saunders D."/>
            <person name="Sodergren E.J."/>
            <person name="Davis P."/>
            <person name="Kerhornou A."/>
            <person name="Nie X."/>
            <person name="Hall N."/>
            <person name="Anjard C."/>
            <person name="Hemphill L."/>
            <person name="Bason N."/>
            <person name="Farbrother P."/>
            <person name="Desany B."/>
            <person name="Just E."/>
            <person name="Morio T."/>
            <person name="Rost R."/>
            <person name="Churcher C.M."/>
            <person name="Cooper J."/>
            <person name="Haydock S."/>
            <person name="van Driessche N."/>
            <person name="Cronin A."/>
            <person name="Goodhead I."/>
            <person name="Muzny D.M."/>
            <person name="Mourier T."/>
            <person name="Pain A."/>
            <person name="Lu M."/>
            <person name="Harper D."/>
            <person name="Lindsay R."/>
            <person name="Hauser H."/>
            <person name="James K.D."/>
            <person name="Quiles M."/>
            <person name="Madan Babu M."/>
            <person name="Saito T."/>
            <person name="Buchrieser C."/>
            <person name="Wardroper A."/>
            <person name="Felder M."/>
            <person name="Thangavelu M."/>
            <person name="Johnson D."/>
            <person name="Knights A."/>
            <person name="Loulseged H."/>
            <person name="Mungall K.L."/>
            <person name="Oliver K."/>
            <person name="Price C."/>
            <person name="Quail M.A."/>
            <person name="Urushihara H."/>
            <person name="Hernandez J."/>
            <person name="Rabbinowitsch E."/>
            <person name="Steffen D."/>
            <person name="Sanders M."/>
            <person name="Ma J."/>
            <person name="Kohara Y."/>
            <person name="Sharp S."/>
            <person name="Simmonds M.N."/>
            <person name="Spiegler S."/>
            <person name="Tivey A."/>
            <person name="Sugano S."/>
            <person name="White B."/>
            <person name="Walker D."/>
            <person name="Woodward J.R."/>
            <person name="Winckler T."/>
            <person name="Tanaka Y."/>
            <person name="Shaulsky G."/>
            <person name="Schleicher M."/>
            <person name="Weinstock G.M."/>
            <person name="Rosenthal A."/>
            <person name="Cox E.C."/>
            <person name="Chisholm R.L."/>
            <person name="Gibbs R.A."/>
            <person name="Loomis W.F."/>
            <person name="Platzer M."/>
            <person name="Kay R.R."/>
            <person name="Williams J.G."/>
            <person name="Dear P.H."/>
            <person name="Noegel A.A."/>
            <person name="Barrell B.G."/>
            <person name="Kuspa A."/>
        </authorList>
    </citation>
    <scope>NUCLEOTIDE SEQUENCE [LARGE SCALE GENOMIC DNA]</scope>
    <source>
        <strain>AX4</strain>
    </source>
</reference>
<reference key="2">
    <citation type="journal article" date="2003" name="Mech. Dev.">
        <title>Construction of a gamete-enriched gene pool and RNAi-mediated functional analysis in Dictyostelium discoideum.</title>
        <authorList>
            <person name="Muramoto T."/>
            <person name="Suzuki K."/>
            <person name="Shimizu H."/>
            <person name="Kohara Y."/>
            <person name="Kohriki E."/>
            <person name="Obara S."/>
            <person name="Tanaka Y."/>
            <person name="Urushihara H."/>
        </authorList>
    </citation>
    <scope>IDENTIFICATION</scope>
</reference>
<reference key="3">
    <citation type="journal article" date="2008" name="BMC Genomics">
        <title>Genome-wide transcriptional changes induced by phagocytosis or growth on bacteria in Dictyostelium.</title>
        <authorList>
            <person name="Sillo A."/>
            <person name="Bloomfield G."/>
            <person name="Balest A."/>
            <person name="Balbo A."/>
            <person name="Pergolizzi B."/>
            <person name="Peracino B."/>
            <person name="Skelton J."/>
            <person name="Ivens A."/>
            <person name="Bozzaro S."/>
        </authorList>
    </citation>
    <scope>IDENTIFICATION</scope>
</reference>
<accession>Q55G75</accession>
<feature type="chain" id="PRO_0000368214" description="PH domain-containing protein DDB_G0267786">
    <location>
        <begin position="1"/>
        <end position="528"/>
    </location>
</feature>
<feature type="domain" description="PH" evidence="1">
    <location>
        <begin position="59"/>
        <end position="180"/>
    </location>
</feature>
<organism>
    <name type="scientific">Dictyostelium discoideum</name>
    <name type="common">Social amoeba</name>
    <dbReference type="NCBI Taxonomy" id="44689"/>
    <lineage>
        <taxon>Eukaryota</taxon>
        <taxon>Amoebozoa</taxon>
        <taxon>Evosea</taxon>
        <taxon>Eumycetozoa</taxon>
        <taxon>Dictyostelia</taxon>
        <taxon>Dictyosteliales</taxon>
        <taxon>Dictyosteliaceae</taxon>
        <taxon>Dictyostelium</taxon>
    </lineage>
</organism>
<keyword id="KW-1185">Reference proteome</keyword>
<name>Y7786_DICDI</name>
<protein>
    <recommendedName>
        <fullName>PH domain-containing protein DDB_G0267786</fullName>
    </recommendedName>
</protein>